<reference key="1">
    <citation type="journal article" date="2002" name="Nat. Neurosci.">
        <title>The olfactory receptor gene superfamily of the mouse.</title>
        <authorList>
            <person name="Zhang X."/>
            <person name="Firestein S."/>
        </authorList>
    </citation>
    <scope>NUCLEOTIDE SEQUENCE [GENOMIC DNA]</scope>
</reference>
<reference key="2">
    <citation type="journal article" date="2002" name="Hum. Mol. Genet.">
        <title>Different evolutionary processes shaped the mouse and human olfactory receptor gene families.</title>
        <authorList>
            <person name="Young J.M."/>
            <person name="Friedman C."/>
            <person name="Williams E.M."/>
            <person name="Ross J.A."/>
            <person name="Tonnes-Priddy L."/>
            <person name="Trask B.J."/>
        </authorList>
    </citation>
    <scope>NUCLEOTIDE SEQUENCE [GENOMIC DNA]</scope>
</reference>
<reference key="3">
    <citation type="journal article" date="2002" name="Hum. Mol. Genet.">
        <authorList>
            <person name="Young J.M."/>
            <person name="Friedman C."/>
            <person name="Williams E.M."/>
            <person name="Ross J.A."/>
            <person name="Tonnes-Priddy L."/>
            <person name="Trask B.J."/>
        </authorList>
    </citation>
    <scope>ERRATUM OF PUBMED:11875048</scope>
</reference>
<organism>
    <name type="scientific">Mus musculus</name>
    <name type="common">Mouse</name>
    <dbReference type="NCBI Taxonomy" id="10090"/>
    <lineage>
        <taxon>Eukaryota</taxon>
        <taxon>Metazoa</taxon>
        <taxon>Chordata</taxon>
        <taxon>Craniata</taxon>
        <taxon>Vertebrata</taxon>
        <taxon>Euteleostomi</taxon>
        <taxon>Mammalia</taxon>
        <taxon>Eutheria</taxon>
        <taxon>Euarchontoglires</taxon>
        <taxon>Glires</taxon>
        <taxon>Rodentia</taxon>
        <taxon>Myomorpha</taxon>
        <taxon>Muroidea</taxon>
        <taxon>Muridae</taxon>
        <taxon>Murinae</taxon>
        <taxon>Mus</taxon>
        <taxon>Mus</taxon>
    </lineage>
</organism>
<accession>Q8VEW6</accession>
<proteinExistence type="inferred from homology"/>
<evidence type="ECO:0000255" key="1"/>
<evidence type="ECO:0000255" key="2">
    <source>
        <dbReference type="PROSITE-ProRule" id="PRU00521"/>
    </source>
</evidence>
<evidence type="ECO:0000305" key="3"/>
<evidence type="ECO:0000312" key="4">
    <source>
        <dbReference type="MGI" id="MGI:3030344"/>
    </source>
</evidence>
<feature type="chain" id="PRO_0000150856" description="Olfactory receptor 5P81">
    <location>
        <begin position="1"/>
        <end position="314"/>
    </location>
</feature>
<feature type="topological domain" description="Extracellular" evidence="1">
    <location>
        <begin position="1"/>
        <end position="28"/>
    </location>
</feature>
<feature type="transmembrane region" description="Helical; Name=1" evidence="1">
    <location>
        <begin position="29"/>
        <end position="49"/>
    </location>
</feature>
<feature type="topological domain" description="Cytoplasmic" evidence="1">
    <location>
        <begin position="50"/>
        <end position="57"/>
    </location>
</feature>
<feature type="transmembrane region" description="Helical; Name=2" evidence="1">
    <location>
        <begin position="58"/>
        <end position="78"/>
    </location>
</feature>
<feature type="topological domain" description="Extracellular" evidence="1">
    <location>
        <begin position="79"/>
        <end position="102"/>
    </location>
</feature>
<feature type="transmembrane region" description="Helical; Name=3" evidence="1">
    <location>
        <begin position="103"/>
        <end position="123"/>
    </location>
</feature>
<feature type="topological domain" description="Cytoplasmic" evidence="1">
    <location>
        <begin position="124"/>
        <end position="136"/>
    </location>
</feature>
<feature type="transmembrane region" description="Helical; Name=4" evidence="1">
    <location>
        <begin position="137"/>
        <end position="157"/>
    </location>
</feature>
<feature type="topological domain" description="Extracellular" evidence="1">
    <location>
        <begin position="158"/>
        <end position="199"/>
    </location>
</feature>
<feature type="transmembrane region" description="Helical; Name=5" evidence="1">
    <location>
        <begin position="200"/>
        <end position="220"/>
    </location>
</feature>
<feature type="topological domain" description="Cytoplasmic" evidence="1">
    <location>
        <begin position="221"/>
        <end position="240"/>
    </location>
</feature>
<feature type="transmembrane region" description="Helical; Name=6" evidence="1">
    <location>
        <begin position="241"/>
        <end position="261"/>
    </location>
</feature>
<feature type="topological domain" description="Extracellular" evidence="1">
    <location>
        <begin position="262"/>
        <end position="274"/>
    </location>
</feature>
<feature type="transmembrane region" description="Helical; Name=7" evidence="1">
    <location>
        <begin position="275"/>
        <end position="295"/>
    </location>
</feature>
<feature type="topological domain" description="Cytoplasmic" evidence="1">
    <location>
        <begin position="296"/>
        <end position="314"/>
    </location>
</feature>
<feature type="glycosylation site" description="N-linked (GlcNAc...) asparagine" evidence="1">
    <location>
        <position position="8"/>
    </location>
</feature>
<feature type="disulfide bond" evidence="2">
    <location>
        <begin position="100"/>
        <end position="192"/>
    </location>
</feature>
<name>O5P81_MOUSE</name>
<dbReference type="EMBL" id="AY073782">
    <property type="protein sequence ID" value="AAL61445.1"/>
    <property type="molecule type" value="Genomic_DNA"/>
</dbReference>
<dbReference type="EMBL" id="AY317618">
    <property type="protein sequence ID" value="AAP71008.1"/>
    <property type="molecule type" value="Genomic_DNA"/>
</dbReference>
<dbReference type="CCDS" id="CCDS21724.1"/>
<dbReference type="RefSeq" id="NP_666423.1">
    <property type="nucleotide sequence ID" value="NM_146311.2"/>
</dbReference>
<dbReference type="RefSeq" id="XP_011240111.1">
    <property type="nucleotide sequence ID" value="XM_011241809.1"/>
</dbReference>
<dbReference type="SMR" id="Q8VEW6"/>
<dbReference type="FunCoup" id="Q8VEW6">
    <property type="interactions" value="1141"/>
</dbReference>
<dbReference type="STRING" id="10090.ENSMUSP00000149492"/>
<dbReference type="GlyCosmos" id="Q8VEW6">
    <property type="glycosylation" value="1 site, No reported glycans"/>
</dbReference>
<dbReference type="GlyGen" id="Q8VEW6">
    <property type="glycosylation" value="1 site"/>
</dbReference>
<dbReference type="PaxDb" id="10090-ENSMUSP00000075637"/>
<dbReference type="Ensembl" id="ENSMUST00000076289.2">
    <property type="protein sequence ID" value="ENSMUSP00000075637.2"/>
    <property type="gene ID" value="ENSMUSG00000096209.5"/>
</dbReference>
<dbReference type="Ensembl" id="ENSMUST00000213979.3">
    <property type="protein sequence ID" value="ENSMUSP00000149237.2"/>
    <property type="gene ID" value="ENSMUSG00000096209.5"/>
</dbReference>
<dbReference type="Ensembl" id="ENSMUST00000216331.2">
    <property type="protein sequence ID" value="ENSMUSP00000149492.2"/>
    <property type="gene ID" value="ENSMUSG00000096209.5"/>
</dbReference>
<dbReference type="Ensembl" id="ENSMUST00000217170.2">
    <property type="protein sequence ID" value="ENSMUSP00000149693.2"/>
    <property type="gene ID" value="ENSMUSG00000096209.5"/>
</dbReference>
<dbReference type="GeneID" id="258308"/>
<dbReference type="KEGG" id="mmu:258308"/>
<dbReference type="UCSC" id="uc009jct.1">
    <property type="organism name" value="mouse"/>
</dbReference>
<dbReference type="AGR" id="MGI:3030344"/>
<dbReference type="CTD" id="258308"/>
<dbReference type="MGI" id="MGI:3030344">
    <property type="gene designation" value="Or5p81"/>
</dbReference>
<dbReference type="VEuPathDB" id="HostDB:ENSMUSG00000096209"/>
<dbReference type="eggNOG" id="ENOG502SKA1">
    <property type="taxonomic scope" value="Eukaryota"/>
</dbReference>
<dbReference type="GeneTree" id="ENSGT01130000278279"/>
<dbReference type="HOGENOM" id="CLU_012526_1_0_1"/>
<dbReference type="InParanoid" id="Q8VEW6"/>
<dbReference type="OMA" id="FLHASCF"/>
<dbReference type="OrthoDB" id="9611486at2759"/>
<dbReference type="PhylomeDB" id="Q8VEW6"/>
<dbReference type="TreeFam" id="TF338848"/>
<dbReference type="BioGRID-ORCS" id="258308">
    <property type="hits" value="2 hits in 71 CRISPR screens"/>
</dbReference>
<dbReference type="PRO" id="PR:Q8VEW6"/>
<dbReference type="Proteomes" id="UP000000589">
    <property type="component" value="Chromosome 7"/>
</dbReference>
<dbReference type="RNAct" id="Q8VEW6">
    <property type="molecule type" value="protein"/>
</dbReference>
<dbReference type="Bgee" id="ENSMUSG00000096209">
    <property type="expression patterns" value="Expressed in epiblast cell in embryo and 4 other cell types or tissues"/>
</dbReference>
<dbReference type="GO" id="GO:0016020">
    <property type="term" value="C:membrane"/>
    <property type="evidence" value="ECO:0000247"/>
    <property type="project" value="MGI"/>
</dbReference>
<dbReference type="GO" id="GO:0005886">
    <property type="term" value="C:plasma membrane"/>
    <property type="evidence" value="ECO:0007669"/>
    <property type="project" value="UniProtKB-SubCell"/>
</dbReference>
<dbReference type="GO" id="GO:0004930">
    <property type="term" value="F:G protein-coupled receptor activity"/>
    <property type="evidence" value="ECO:0007669"/>
    <property type="project" value="UniProtKB-KW"/>
</dbReference>
<dbReference type="GO" id="GO:0004984">
    <property type="term" value="F:olfactory receptor activity"/>
    <property type="evidence" value="ECO:0000247"/>
    <property type="project" value="MGI"/>
</dbReference>
<dbReference type="GO" id="GO:0007186">
    <property type="term" value="P:G protein-coupled receptor signaling pathway"/>
    <property type="evidence" value="ECO:0000247"/>
    <property type="project" value="MGI"/>
</dbReference>
<dbReference type="GO" id="GO:0007608">
    <property type="term" value="P:sensory perception of smell"/>
    <property type="evidence" value="ECO:0000247"/>
    <property type="project" value="MGI"/>
</dbReference>
<dbReference type="CDD" id="cd15416">
    <property type="entry name" value="7tmA_OR5P-like"/>
    <property type="match status" value="1"/>
</dbReference>
<dbReference type="FunFam" id="1.20.1070.10:FF:000004">
    <property type="entry name" value="Olfactory receptor"/>
    <property type="match status" value="1"/>
</dbReference>
<dbReference type="Gene3D" id="1.20.1070.10">
    <property type="entry name" value="Rhodopsin 7-helix transmembrane proteins"/>
    <property type="match status" value="1"/>
</dbReference>
<dbReference type="InterPro" id="IPR000276">
    <property type="entry name" value="GPCR_Rhodpsn"/>
</dbReference>
<dbReference type="InterPro" id="IPR017452">
    <property type="entry name" value="GPCR_Rhodpsn_7TM"/>
</dbReference>
<dbReference type="InterPro" id="IPR000725">
    <property type="entry name" value="Olfact_rcpt"/>
</dbReference>
<dbReference type="PANTHER" id="PTHR48018">
    <property type="entry name" value="OLFACTORY RECEPTOR"/>
    <property type="match status" value="1"/>
</dbReference>
<dbReference type="Pfam" id="PF13853">
    <property type="entry name" value="7tm_4"/>
    <property type="match status" value="1"/>
</dbReference>
<dbReference type="PRINTS" id="PR00237">
    <property type="entry name" value="GPCRRHODOPSN"/>
</dbReference>
<dbReference type="PRINTS" id="PR00245">
    <property type="entry name" value="OLFACTORYR"/>
</dbReference>
<dbReference type="SUPFAM" id="SSF81321">
    <property type="entry name" value="Family A G protein-coupled receptor-like"/>
    <property type="match status" value="1"/>
</dbReference>
<dbReference type="PROSITE" id="PS00237">
    <property type="entry name" value="G_PROTEIN_RECEP_F1_1"/>
    <property type="match status" value="1"/>
</dbReference>
<dbReference type="PROSITE" id="PS50262">
    <property type="entry name" value="G_PROTEIN_RECEP_F1_2"/>
    <property type="match status" value="1"/>
</dbReference>
<sequence>MAFLEDGNHTVVTEFILLGLTDDPVLRVILFIIILCIYLVTVSGNLSTILLIRVSSQLHHPMYFFLSHLASIDIAISSSVTPNMVVNFLVERSSISYIGCGIQLGSAVFFGAIECFLLAVMAYDRFVAICNPLLYSTKMSKQVCIQLLVGSYIGGFIHASFFTLSFVSFLFCGPNRINHFFCDFTPLVELSCSDNSVLIILDSFSTGTIIVITVFVIAISYTCILITILKMHSTEGRHKAFSTCTSHLTVVTLLYGTVTFIYVMPKSSYSTDQNKVISVFYMVVIPMLNPIIYSLRNNEIKGALKKQLGEKNIF</sequence>
<keyword id="KW-1003">Cell membrane</keyword>
<keyword id="KW-1015">Disulfide bond</keyword>
<keyword id="KW-0297">G-protein coupled receptor</keyword>
<keyword id="KW-0325">Glycoprotein</keyword>
<keyword id="KW-0472">Membrane</keyword>
<keyword id="KW-0552">Olfaction</keyword>
<keyword id="KW-0675">Receptor</keyword>
<keyword id="KW-1185">Reference proteome</keyword>
<keyword id="KW-0716">Sensory transduction</keyword>
<keyword id="KW-0807">Transducer</keyword>
<keyword id="KW-0812">Transmembrane</keyword>
<keyword id="KW-1133">Transmembrane helix</keyword>
<protein>
    <recommendedName>
        <fullName evidence="3">Olfactory receptor 5P81</fullName>
    </recommendedName>
    <alternativeName>
        <fullName>Olfactory receptor 204-34</fullName>
    </alternativeName>
    <alternativeName>
        <fullName>Olfactory receptor 510</fullName>
    </alternativeName>
</protein>
<gene>
    <name evidence="4" type="primary">Or5p81</name>
    <name evidence="4" type="synonym">Mor204-34</name>
    <name evidence="4" type="synonym">Olfr510</name>
</gene>
<comment type="function">
    <text>Potential odorant receptor.</text>
</comment>
<comment type="subcellular location">
    <subcellularLocation>
        <location evidence="3">Cell membrane</location>
        <topology evidence="1">Multi-pass membrane protein</topology>
    </subcellularLocation>
</comment>
<comment type="similarity">
    <text evidence="2">Belongs to the G-protein coupled receptor 1 family.</text>
</comment>